<dbReference type="EC" id="3.6.1.-"/>
<dbReference type="EMBL" id="AL110500">
    <property type="protein sequence ID" value="CAB54476.1"/>
    <property type="molecule type" value="Genomic_DNA"/>
</dbReference>
<dbReference type="PIR" id="T27454">
    <property type="entry name" value="T27454"/>
</dbReference>
<dbReference type="RefSeq" id="NP_493372.1">
    <property type="nucleotide sequence ID" value="NM_060971.3"/>
</dbReference>
<dbReference type="SMR" id="Q9NA25"/>
<dbReference type="BioGRID" id="55353">
    <property type="interactions" value="2"/>
</dbReference>
<dbReference type="DIP" id="DIP-24589N"/>
<dbReference type="FunCoup" id="Q9NA25">
    <property type="interactions" value="302"/>
</dbReference>
<dbReference type="IntAct" id="Q9NA25">
    <property type="interactions" value="1"/>
</dbReference>
<dbReference type="STRING" id="6239.Y87G2A.14.1"/>
<dbReference type="PaxDb" id="6239-Y87G2A.14"/>
<dbReference type="PeptideAtlas" id="Q9NA25"/>
<dbReference type="EnsemblMetazoa" id="Y87G2A.14.1">
    <property type="protein sequence ID" value="Y87G2A.14.1"/>
    <property type="gene ID" value="WBGene00003585"/>
</dbReference>
<dbReference type="GeneID" id="190780"/>
<dbReference type="KEGG" id="cel:CELE_Y87G2A.14"/>
<dbReference type="UCSC" id="Y87G2A.14">
    <property type="organism name" value="c. elegans"/>
</dbReference>
<dbReference type="AGR" id="WB:WBGene00003585"/>
<dbReference type="CTD" id="190780"/>
<dbReference type="WormBase" id="Y87G2A.14">
    <property type="protein sequence ID" value="CE23122"/>
    <property type="gene ID" value="WBGene00003585"/>
    <property type="gene designation" value="ndx-8"/>
</dbReference>
<dbReference type="eggNOG" id="KOG3069">
    <property type="taxonomic scope" value="Eukaryota"/>
</dbReference>
<dbReference type="GeneTree" id="ENSGT00940000162775"/>
<dbReference type="HOGENOM" id="CLU_040940_6_0_1"/>
<dbReference type="InParanoid" id="Q9NA25"/>
<dbReference type="OMA" id="HSFHFVD"/>
<dbReference type="OrthoDB" id="206213at2759"/>
<dbReference type="PhylomeDB" id="Q9NA25"/>
<dbReference type="Reactome" id="R-CEL-9033241">
    <property type="pathway name" value="Peroxisomal protein import"/>
</dbReference>
<dbReference type="PRO" id="PR:Q9NA25"/>
<dbReference type="Proteomes" id="UP000001940">
    <property type="component" value="Chromosome I"/>
</dbReference>
<dbReference type="Bgee" id="WBGene00003585">
    <property type="expression patterns" value="Expressed in larva and 3 other cell types or tissues"/>
</dbReference>
<dbReference type="GO" id="GO:0043229">
    <property type="term" value="C:intracellular organelle"/>
    <property type="evidence" value="ECO:0000314"/>
    <property type="project" value="WormBase"/>
</dbReference>
<dbReference type="GO" id="GO:0005778">
    <property type="term" value="C:peroxisomal membrane"/>
    <property type="evidence" value="ECO:0007669"/>
    <property type="project" value="UniProtKB-SubCell"/>
</dbReference>
<dbReference type="GO" id="GO:0005777">
    <property type="term" value="C:peroxisome"/>
    <property type="evidence" value="ECO:0000250"/>
    <property type="project" value="WormBase"/>
</dbReference>
<dbReference type="GO" id="GO:0010945">
    <property type="term" value="F:coenzyme A diphosphatase activity"/>
    <property type="evidence" value="ECO:0000314"/>
    <property type="project" value="WormBase"/>
</dbReference>
<dbReference type="GO" id="GO:0047994">
    <property type="term" value="F:hydroxymethylglutaryl-CoA hydrolase activity"/>
    <property type="evidence" value="ECO:0000314"/>
    <property type="project" value="WormBase"/>
</dbReference>
<dbReference type="GO" id="GO:0046872">
    <property type="term" value="F:metal ion binding"/>
    <property type="evidence" value="ECO:0007669"/>
    <property type="project" value="UniProtKB-KW"/>
</dbReference>
<dbReference type="GO" id="GO:0004778">
    <property type="term" value="F:succinyl-CoA hydrolase activity"/>
    <property type="evidence" value="ECO:0000314"/>
    <property type="project" value="WormBase"/>
</dbReference>
<dbReference type="GO" id="GO:0015938">
    <property type="term" value="P:coenzyme A catabolic process"/>
    <property type="evidence" value="ECO:0000314"/>
    <property type="project" value="WormBase"/>
</dbReference>
<dbReference type="CDD" id="cd03426">
    <property type="entry name" value="NUDIX_CoAse_Nudt7"/>
    <property type="match status" value="1"/>
</dbReference>
<dbReference type="FunFam" id="3.90.79.10:FF:000125">
    <property type="entry name" value="Probable nudix hydrolase C6G9.05"/>
    <property type="match status" value="1"/>
</dbReference>
<dbReference type="Gene3D" id="3.90.79.10">
    <property type="entry name" value="Nucleoside Triphosphate Pyrophosphohydrolase"/>
    <property type="match status" value="1"/>
</dbReference>
<dbReference type="InterPro" id="IPR045121">
    <property type="entry name" value="CoAse"/>
</dbReference>
<dbReference type="InterPro" id="IPR015797">
    <property type="entry name" value="NUDIX_hydrolase-like_dom_sf"/>
</dbReference>
<dbReference type="InterPro" id="IPR000086">
    <property type="entry name" value="NUDIX_hydrolase_dom"/>
</dbReference>
<dbReference type="PANTHER" id="PTHR12992">
    <property type="entry name" value="NUDIX HYDROLASE"/>
    <property type="match status" value="1"/>
</dbReference>
<dbReference type="PANTHER" id="PTHR12992:SF24">
    <property type="entry name" value="PEROXISOMAL COENZYME A DIPHOSPHATASE NUDT7"/>
    <property type="match status" value="1"/>
</dbReference>
<dbReference type="Pfam" id="PF00293">
    <property type="entry name" value="NUDIX"/>
    <property type="match status" value="1"/>
</dbReference>
<dbReference type="SUPFAM" id="SSF55811">
    <property type="entry name" value="Nudix"/>
    <property type="match status" value="1"/>
</dbReference>
<dbReference type="PROSITE" id="PS51462">
    <property type="entry name" value="NUDIX"/>
    <property type="match status" value="1"/>
</dbReference>
<keyword id="KW-0378">Hydrolase</keyword>
<keyword id="KW-0460">Magnesium</keyword>
<keyword id="KW-0464">Manganese</keyword>
<keyword id="KW-0472">Membrane</keyword>
<keyword id="KW-0479">Metal-binding</keyword>
<keyword id="KW-0576">Peroxisome</keyword>
<keyword id="KW-1185">Reference proteome</keyword>
<keyword id="KW-0812">Transmembrane</keyword>
<keyword id="KW-1133">Transmembrane helix</keyword>
<gene>
    <name type="primary">ndx-8</name>
    <name type="ORF">Y87G2A.14</name>
</gene>
<feature type="chain" id="PRO_0000057138" description="Peroxisomal coenzyme A diphosphatase ndx-8">
    <location>
        <begin position="1"/>
        <end position="234"/>
    </location>
</feature>
<feature type="transmembrane region" description="Helical" evidence="2">
    <location>
        <begin position="170"/>
        <end position="190"/>
    </location>
</feature>
<feature type="domain" description="Nudix hydrolase" evidence="3">
    <location>
        <begin position="27"/>
        <end position="162"/>
    </location>
</feature>
<feature type="short sequence motif" description="Nudix box">
    <location>
        <begin position="66"/>
        <end position="90"/>
    </location>
</feature>
<feature type="short sequence motif" description="Microbody targeting signal">
    <location>
        <begin position="232"/>
        <end position="234"/>
    </location>
</feature>
<feature type="binding site" evidence="1">
    <location>
        <position position="84"/>
    </location>
    <ligand>
        <name>Mg(2+)</name>
        <dbReference type="ChEBI" id="CHEBI:18420"/>
    </ligand>
</feature>
<feature type="binding site" evidence="1">
    <location>
        <position position="88"/>
    </location>
    <ligand>
        <name>Mg(2+)</name>
        <dbReference type="ChEBI" id="CHEBI:18420"/>
    </ligand>
</feature>
<feature type="mutagenesis site" description="Abolishes localization to peroxisomes." evidence="4">
    <location>
        <begin position="232"/>
        <end position="234"/>
    </location>
</feature>
<proteinExistence type="evidence at protein level"/>
<evidence type="ECO:0000250" key="1"/>
<evidence type="ECO:0000255" key="2"/>
<evidence type="ECO:0000255" key="3">
    <source>
        <dbReference type="PROSITE-ProRule" id="PRU00794"/>
    </source>
</evidence>
<evidence type="ECO:0000269" key="4">
    <source>
    </source>
</evidence>
<evidence type="ECO:0000305" key="5"/>
<reference key="1">
    <citation type="journal article" date="2002" name="BMC Biochem.">
        <title>The Caenorhabditis elegans Y87G2A.14 Nudix hydrolase is a peroxisomal coenzyme A diphosphatase.</title>
        <authorList>
            <person name="AbdelRaheim S.R."/>
            <person name="McLennan A.G."/>
        </authorList>
    </citation>
    <scope>NUCLEOTIDE SEQUENCE [MRNA]</scope>
    <scope>ENZYME ACTIVITY</scope>
    <scope>BIOPHYSICOCHEMICAL PROPERTIES</scope>
    <scope>SUBCELLULAR LOCATION</scope>
    <scope>MUTAGENESIS OF 232-SER--ILE-234</scope>
</reference>
<reference key="2">
    <citation type="journal article" date="1998" name="Science">
        <title>Genome sequence of the nematode C. elegans: a platform for investigating biology.</title>
        <authorList>
            <consortium name="The C. elegans sequencing consortium"/>
        </authorList>
    </citation>
    <scope>NUCLEOTIDE SEQUENCE [LARGE SCALE GENOMIC DNA]</scope>
    <source>
        <strain>Bristol N2</strain>
    </source>
</reference>
<protein>
    <recommendedName>
        <fullName>Peroxisomal coenzyme A diphosphatase ndx-8</fullName>
        <ecNumber>3.6.1.-</ecNumber>
    </recommendedName>
    <alternativeName>
        <fullName>Nudix hydrolase 8</fullName>
    </alternativeName>
</protein>
<comment type="function">
    <text>Coenzyme A diphosphatase which mediates the cleavage of CoA into 3',5'-ADP and 4'-phosphopantetheine.</text>
</comment>
<comment type="cofactor">
    <cofactor evidence="1">
        <name>Mg(2+)</name>
        <dbReference type="ChEBI" id="CHEBI:18420"/>
    </cofactor>
    <cofactor evidence="1">
        <name>Mn(2+)</name>
        <dbReference type="ChEBI" id="CHEBI:29035"/>
    </cofactor>
</comment>
<comment type="biophysicochemical properties">
    <kinetics>
        <KM evidence="4">220 uM for CoA</KM>
    </kinetics>
    <phDependence>
        <text evidence="4">Optimum pH is 9.5.</text>
    </phDependence>
</comment>
<comment type="subcellular location">
    <subcellularLocation>
        <location evidence="5">Peroxisome membrane</location>
        <topology evidence="5">Single-pass membrane protein</topology>
    </subcellularLocation>
</comment>
<comment type="similarity">
    <text evidence="5">Belongs to the Nudix hydrolase family.</text>
</comment>
<organism>
    <name type="scientific">Caenorhabditis elegans</name>
    <dbReference type="NCBI Taxonomy" id="6239"/>
    <lineage>
        <taxon>Eukaryota</taxon>
        <taxon>Metazoa</taxon>
        <taxon>Ecdysozoa</taxon>
        <taxon>Nematoda</taxon>
        <taxon>Chromadorea</taxon>
        <taxon>Rhabditida</taxon>
        <taxon>Rhabditina</taxon>
        <taxon>Rhabditomorpha</taxon>
        <taxon>Rhabditoidea</taxon>
        <taxon>Rhabditidae</taxon>
        <taxon>Peloderinae</taxon>
        <taxon>Caenorhabditis</taxon>
    </lineage>
</organism>
<sequence length="234" mass="26598">MKCVVSRADDLKRMLDLSDVPTKSQGEQDAGVLILLHDDGSEKLKVLLCVRSRQLRRHPGEVCFPGGMMDDEDGQNVRRTAIREAYEEVGVNENDDYLVLGNLPAFRARFGVLIHPTVALLRRPPTFVLSIGEVESIFWIPLSQFLEDTHHSTFLIDEFYMVHVFQFDEYPTTYGVTALMCIVVAIGLLGKLPNFNLMGNLTISDMLDKHLDSIEIIRHVYEFASRKFEPKSKI</sequence>
<accession>Q9NA25</accession>
<name>NDX8_CAEEL</name>